<sequence length="390" mass="44682">MGDTFIRHIALLGFEKRFVPSQHYVYMFLVKWQDLSEKVVYRRFTEIYEFHKTLKEMFPIEAGAINPENRIIPHLPAPKWFDGQRAAENRQGTLTEYCSTLMSLPTKISRCPHLLDFFKVRPDDLKLPTDNQTKKPETYLMPKDGKSTATDITGPIILQTYRAIANYEKTSGSEMALSTGDVVEVVEKSESGWWFCQMKAKRGWIPASFLEPLDSPDETEDPEPNYAGEPYVAIKAYTAVEGDEVSLLEGEAVEVIHKLLDGWWVIRKDDVTGYFPSMYLQKSGQDVSQAQRQIKRGAPPRRSSIRNAHSIHQRSRKRLSQDAYRRNSVRFLQQRRRQARPGPQSPGSPLEEERQTQRSKPQPAVPPRPSADLILNRCSESTKRKLASAV</sequence>
<gene>
    <name evidence="35" type="primary">NCF1</name>
    <name type="synonym">NOXO2</name>
    <name type="synonym">SH3PXD1A</name>
</gene>
<reference key="1">
    <citation type="journal article" date="1989" name="Proc. Natl. Acad. Sci. U.S.A.">
        <title>Cloning of the cDNA and functional expression of the 47-kilodalton cytosolic component of human neutrophil respiratory burst oxidase.</title>
        <authorList>
            <person name="Volpp B.D."/>
            <person name="Nauseef W.M."/>
            <person name="Clark R.A."/>
        </authorList>
    </citation>
    <scope>NUCLEOTIDE SEQUENCE [MRNA] (ISOFORM 1)</scope>
    <scope>FUNCTION</scope>
    <scope>SUBCELLULAR LOCATION</scope>
    <scope>TISSUE SPECIFICITY</scope>
</reference>
<reference key="2">
    <citation type="journal article" date="1989" name="Proc. Natl. Acad. Sci. U.S.A.">
        <authorList>
            <person name="Volpp B.D."/>
            <person name="Nauseef W.M."/>
            <person name="Clark R.A."/>
        </authorList>
    </citation>
    <scope>ERRATUM OF PUBMED:2550933</scope>
    <scope>SEQUENCE REVISION</scope>
</reference>
<reference key="3">
    <citation type="journal article" date="1989" name="Science">
        <title>Recombinant 47-kilodalton cytosol factor restores NADPH oxidase in chronic granulomatous disease.</title>
        <authorList>
            <person name="Lomax K.J."/>
            <person name="Leto T.L."/>
            <person name="Nunoi H."/>
            <person name="Gallin J.I."/>
            <person name="Malech H.L."/>
        </authorList>
    </citation>
    <scope>NUCLEOTIDE SEQUENCE [MRNA] (ISOFORM 1)</scope>
    <scope>FUNCTION</scope>
    <scope>TISSUE SPECIFICITY</scope>
    <scope>VARIANT ASP-166</scope>
</reference>
<reference key="4">
    <citation type="journal article" date="1990" name="Mol. Cell. Biol.">
        <title>Characterization of the 47-kilodalton autosomal chronic granulomatous disease protein: tissue-specific expression and transcriptional control by retinoic acid.</title>
        <authorList>
            <person name="Rodaway A.R.F."/>
            <person name="Teahan C.G."/>
            <person name="Casimir C.M."/>
            <person name="Segal A.W."/>
            <person name="Bentley D.L."/>
        </authorList>
    </citation>
    <scope>NUCLEOTIDE SEQUENCE [MRNA] (ISOFORM 1)</scope>
    <scope>VARIANT ASP-166</scope>
</reference>
<reference key="5">
    <citation type="journal article" date="1997" name="J. Clin. Invest.">
        <title>A p47-phox pseudogene carries the most common mutation causing p47-phox-deficient chronic granulomatous disease.</title>
        <authorList>
            <person name="Gorlach A."/>
            <person name="Lee P.L."/>
            <person name="Roesler J."/>
            <person name="Hopkins P.J."/>
            <person name="Christensen B."/>
            <person name="Green E.D."/>
            <person name="Chanock S.J."/>
            <person name="Curnutte J.T."/>
        </authorList>
    </citation>
    <scope>NUCLEOTIDE SEQUENCE [GENOMIC DNA]</scope>
    <scope>VARIANTS SER-160 AND VAL-308</scope>
</reference>
<reference key="6">
    <citation type="journal article" date="2000" name="Blood Cells Mol. Dis.">
        <title>Genomic structure of the human p47-phox (NCF1) gene.</title>
        <authorList>
            <person name="Chanock S.J."/>
            <person name="Roesler J."/>
            <person name="Zhan S."/>
            <person name="Hopkins P."/>
            <person name="Lee P."/>
            <person name="Barrett D.T."/>
            <person name="Christensen B.L."/>
            <person name="Curnutte J.T."/>
            <person name="Goerlach A."/>
        </authorList>
    </citation>
    <scope>NUCLEOTIDE SEQUENCE [GENOMIC DNA]</scope>
    <scope>VARIANTS SER-160 AND VAL-308</scope>
</reference>
<reference key="7">
    <citation type="journal article" date="2002" name="Exp. Cell Res.">
        <title>TNFalpha activates c-jun amino terminal kinase through p47(phox).</title>
        <authorList>
            <person name="Gu Y."/>
            <person name="Xu Y.C."/>
            <person name="Wu R.F."/>
            <person name="Souza R.F."/>
            <person name="Nwariaku F.E."/>
            <person name="Terada L.S."/>
        </authorList>
    </citation>
    <scope>NUCLEOTIDE SEQUENCE [MRNA] (ISOFORM 1)</scope>
    <scope>VARIANTS ASP-166 AND GLU-258</scope>
    <source>
        <tissue>Umbilical vein</tissue>
    </source>
</reference>
<reference key="8">
    <citation type="journal article" date="2004" name="Nat. Genet.">
        <title>Complete sequencing and characterization of 21,243 full-length human cDNAs.</title>
        <authorList>
            <person name="Ota T."/>
            <person name="Suzuki Y."/>
            <person name="Nishikawa T."/>
            <person name="Otsuki T."/>
            <person name="Sugiyama T."/>
            <person name="Irie R."/>
            <person name="Wakamatsu A."/>
            <person name="Hayashi K."/>
            <person name="Sato H."/>
            <person name="Nagai K."/>
            <person name="Kimura K."/>
            <person name="Makita H."/>
            <person name="Sekine M."/>
            <person name="Obayashi M."/>
            <person name="Nishi T."/>
            <person name="Shibahara T."/>
            <person name="Tanaka T."/>
            <person name="Ishii S."/>
            <person name="Yamamoto J."/>
            <person name="Saito K."/>
            <person name="Kawai Y."/>
            <person name="Isono Y."/>
            <person name="Nakamura Y."/>
            <person name="Nagahari K."/>
            <person name="Murakami K."/>
            <person name="Yasuda T."/>
            <person name="Iwayanagi T."/>
            <person name="Wagatsuma M."/>
            <person name="Shiratori A."/>
            <person name="Sudo H."/>
            <person name="Hosoiri T."/>
            <person name="Kaku Y."/>
            <person name="Kodaira H."/>
            <person name="Kondo H."/>
            <person name="Sugawara M."/>
            <person name="Takahashi M."/>
            <person name="Kanda K."/>
            <person name="Yokoi T."/>
            <person name="Furuya T."/>
            <person name="Kikkawa E."/>
            <person name="Omura Y."/>
            <person name="Abe K."/>
            <person name="Kamihara K."/>
            <person name="Katsuta N."/>
            <person name="Sato K."/>
            <person name="Tanikawa M."/>
            <person name="Yamazaki M."/>
            <person name="Ninomiya K."/>
            <person name="Ishibashi T."/>
            <person name="Yamashita H."/>
            <person name="Murakawa K."/>
            <person name="Fujimori K."/>
            <person name="Tanai H."/>
            <person name="Kimata M."/>
            <person name="Watanabe M."/>
            <person name="Hiraoka S."/>
            <person name="Chiba Y."/>
            <person name="Ishida S."/>
            <person name="Ono Y."/>
            <person name="Takiguchi S."/>
            <person name="Watanabe S."/>
            <person name="Yosida M."/>
            <person name="Hotuta T."/>
            <person name="Kusano J."/>
            <person name="Kanehori K."/>
            <person name="Takahashi-Fujii A."/>
            <person name="Hara H."/>
            <person name="Tanase T.-O."/>
            <person name="Nomura Y."/>
            <person name="Togiya S."/>
            <person name="Komai F."/>
            <person name="Hara R."/>
            <person name="Takeuchi K."/>
            <person name="Arita M."/>
            <person name="Imose N."/>
            <person name="Musashino K."/>
            <person name="Yuuki H."/>
            <person name="Oshima A."/>
            <person name="Sasaki N."/>
            <person name="Aotsuka S."/>
            <person name="Yoshikawa Y."/>
            <person name="Matsunawa H."/>
            <person name="Ichihara T."/>
            <person name="Shiohata N."/>
            <person name="Sano S."/>
            <person name="Moriya S."/>
            <person name="Momiyama H."/>
            <person name="Satoh N."/>
            <person name="Takami S."/>
            <person name="Terashima Y."/>
            <person name="Suzuki O."/>
            <person name="Nakagawa S."/>
            <person name="Senoh A."/>
            <person name="Mizoguchi H."/>
            <person name="Goto Y."/>
            <person name="Shimizu F."/>
            <person name="Wakebe H."/>
            <person name="Hishigaki H."/>
            <person name="Watanabe T."/>
            <person name="Sugiyama A."/>
            <person name="Takemoto M."/>
            <person name="Kawakami B."/>
            <person name="Yamazaki M."/>
            <person name="Watanabe K."/>
            <person name="Kumagai A."/>
            <person name="Itakura S."/>
            <person name="Fukuzumi Y."/>
            <person name="Fujimori Y."/>
            <person name="Komiyama M."/>
            <person name="Tashiro H."/>
            <person name="Tanigami A."/>
            <person name="Fujiwara T."/>
            <person name="Ono T."/>
            <person name="Yamada K."/>
            <person name="Fujii Y."/>
            <person name="Ozaki K."/>
            <person name="Hirao M."/>
            <person name="Ohmori Y."/>
            <person name="Kawabata A."/>
            <person name="Hikiji T."/>
            <person name="Kobatake N."/>
            <person name="Inagaki H."/>
            <person name="Ikema Y."/>
            <person name="Okamoto S."/>
            <person name="Okitani R."/>
            <person name="Kawakami T."/>
            <person name="Noguchi S."/>
            <person name="Itoh T."/>
            <person name="Shigeta K."/>
            <person name="Senba T."/>
            <person name="Matsumura K."/>
            <person name="Nakajima Y."/>
            <person name="Mizuno T."/>
            <person name="Morinaga M."/>
            <person name="Sasaki M."/>
            <person name="Togashi T."/>
            <person name="Oyama M."/>
            <person name="Hata H."/>
            <person name="Watanabe M."/>
            <person name="Komatsu T."/>
            <person name="Mizushima-Sugano J."/>
            <person name="Satoh T."/>
            <person name="Shirai Y."/>
            <person name="Takahashi Y."/>
            <person name="Nakagawa K."/>
            <person name="Okumura K."/>
            <person name="Nagase T."/>
            <person name="Nomura N."/>
            <person name="Kikuchi H."/>
            <person name="Masuho Y."/>
            <person name="Yamashita R."/>
            <person name="Nakai K."/>
            <person name="Yada T."/>
            <person name="Nakamura Y."/>
            <person name="Ohara O."/>
            <person name="Isogai T."/>
            <person name="Sugano S."/>
        </authorList>
    </citation>
    <scope>NUCLEOTIDE SEQUENCE [LARGE SCALE MRNA] (ISOFORM 2)</scope>
    <source>
        <tissue>Spleen</tissue>
        <tissue>Synovium</tissue>
    </source>
</reference>
<reference key="9">
    <citation type="submission" date="2005-04" db="EMBL/GenBank/DDBJ databases">
        <authorList>
            <person name="Suzuki Y."/>
            <person name="Sugano S."/>
            <person name="Totoki Y."/>
            <person name="Toyoda A."/>
            <person name="Takeda T."/>
            <person name="Sakaki Y."/>
            <person name="Tanaka A."/>
            <person name="Yokoyama S."/>
        </authorList>
    </citation>
    <scope>NUCLEOTIDE SEQUENCE [LARGE SCALE MRNA] (ISOFORM 1)</scope>
    <source>
        <tissue>Spleen</tissue>
    </source>
</reference>
<reference key="10">
    <citation type="journal article" date="2003" name="Nature">
        <title>The DNA sequence of human chromosome 7.</title>
        <authorList>
            <person name="Hillier L.W."/>
            <person name="Fulton R.S."/>
            <person name="Fulton L.A."/>
            <person name="Graves T.A."/>
            <person name="Pepin K.H."/>
            <person name="Wagner-McPherson C."/>
            <person name="Layman D."/>
            <person name="Maas J."/>
            <person name="Jaeger S."/>
            <person name="Walker R."/>
            <person name="Wylie K."/>
            <person name="Sekhon M."/>
            <person name="Becker M.C."/>
            <person name="O'Laughlin M.D."/>
            <person name="Schaller M.E."/>
            <person name="Fewell G.A."/>
            <person name="Delehaunty K.D."/>
            <person name="Miner T.L."/>
            <person name="Nash W.E."/>
            <person name="Cordes M."/>
            <person name="Du H."/>
            <person name="Sun H."/>
            <person name="Edwards J."/>
            <person name="Bradshaw-Cordum H."/>
            <person name="Ali J."/>
            <person name="Andrews S."/>
            <person name="Isak A."/>
            <person name="Vanbrunt A."/>
            <person name="Nguyen C."/>
            <person name="Du F."/>
            <person name="Lamar B."/>
            <person name="Courtney L."/>
            <person name="Kalicki J."/>
            <person name="Ozersky P."/>
            <person name="Bielicki L."/>
            <person name="Scott K."/>
            <person name="Holmes A."/>
            <person name="Harkins R."/>
            <person name="Harris A."/>
            <person name="Strong C.M."/>
            <person name="Hou S."/>
            <person name="Tomlinson C."/>
            <person name="Dauphin-Kohlberg S."/>
            <person name="Kozlowicz-Reilly A."/>
            <person name="Leonard S."/>
            <person name="Rohlfing T."/>
            <person name="Rock S.M."/>
            <person name="Tin-Wollam A.-M."/>
            <person name="Abbott A."/>
            <person name="Minx P."/>
            <person name="Maupin R."/>
            <person name="Strowmatt C."/>
            <person name="Latreille P."/>
            <person name="Miller N."/>
            <person name="Johnson D."/>
            <person name="Murray J."/>
            <person name="Woessner J.P."/>
            <person name="Wendl M.C."/>
            <person name="Yang S.-P."/>
            <person name="Schultz B.R."/>
            <person name="Wallis J.W."/>
            <person name="Spieth J."/>
            <person name="Bieri T.A."/>
            <person name="Nelson J.O."/>
            <person name="Berkowicz N."/>
            <person name="Wohldmann P.E."/>
            <person name="Cook L.L."/>
            <person name="Hickenbotham M.T."/>
            <person name="Eldred J."/>
            <person name="Williams D."/>
            <person name="Bedell J.A."/>
            <person name="Mardis E.R."/>
            <person name="Clifton S.W."/>
            <person name="Chissoe S.L."/>
            <person name="Marra M.A."/>
            <person name="Raymond C."/>
            <person name="Haugen E."/>
            <person name="Gillett W."/>
            <person name="Zhou Y."/>
            <person name="James R."/>
            <person name="Phelps K."/>
            <person name="Iadanoto S."/>
            <person name="Bubb K."/>
            <person name="Simms E."/>
            <person name="Levy R."/>
            <person name="Clendenning J."/>
            <person name="Kaul R."/>
            <person name="Kent W.J."/>
            <person name="Furey T.S."/>
            <person name="Baertsch R.A."/>
            <person name="Brent M.R."/>
            <person name="Keibler E."/>
            <person name="Flicek P."/>
            <person name="Bork P."/>
            <person name="Suyama M."/>
            <person name="Bailey J.A."/>
            <person name="Portnoy M.E."/>
            <person name="Torrents D."/>
            <person name="Chinwalla A.T."/>
            <person name="Gish W.R."/>
            <person name="Eddy S.R."/>
            <person name="McPherson J.D."/>
            <person name="Olson M.V."/>
            <person name="Eichler E.E."/>
            <person name="Green E.D."/>
            <person name="Waterston R.H."/>
            <person name="Wilson R.K."/>
        </authorList>
    </citation>
    <scope>NUCLEOTIDE SEQUENCE [LARGE SCALE GENOMIC DNA]</scope>
    <scope>VARIANT GLY-99</scope>
</reference>
<reference key="11">
    <citation type="journal article" date="2004" name="Genome Res.">
        <title>The status, quality, and expansion of the NIH full-length cDNA project: the Mammalian Gene Collection (MGC).</title>
        <authorList>
            <consortium name="The MGC Project Team"/>
        </authorList>
    </citation>
    <scope>NUCLEOTIDE SEQUENCE [LARGE SCALE MRNA] (ISOFORM 1)</scope>
    <scope>VARIANT GLY-99</scope>
    <source>
        <tissue>Lymph</tissue>
    </source>
</reference>
<reference key="12">
    <citation type="journal article" date="1995" name="Hum. Mol. Genet.">
        <title>Comparison of the positional cloning methods used to isolate the BRCA1 gene.</title>
        <authorList>
            <person name="Harshman K."/>
            <person name="Bell R."/>
            <person name="Rosenthal J."/>
            <person name="Katcher H."/>
            <person name="Miki Y."/>
            <person name="Swenson J."/>
            <person name="Gholami Z."/>
            <person name="Frye C."/>
            <person name="Ding W."/>
            <person name="Dayananth P."/>
            <person name="Eddington K."/>
            <person name="Norris F.H."/>
            <person name="Bristow P.K."/>
            <person name="Phelps R."/>
            <person name="Hattier T."/>
            <person name="Stone S."/>
            <person name="Shaffer D."/>
            <person name="Bayer S."/>
            <person name="Hussey C."/>
            <person name="Tran T."/>
            <person name="Lai M."/>
            <person name="Rosteck P.R. Jr."/>
            <person name="Skolnick M.H."/>
            <person name="Shattuck-Eidens D."/>
            <person name="Kamb A."/>
        </authorList>
    </citation>
    <scope>NUCLEOTIDE SEQUENCE [MRNA] OF 8-31 (ISOFORM 1)</scope>
    <source>
        <tissue>Ovary</tissue>
    </source>
</reference>
<reference key="13">
    <citation type="journal article" date="1991" name="Proc. Natl. Acad. Sci. U.S.A.">
        <title>Autosomal recessive chronic granulomatous disease caused by deletion at a dinucleotide repeat.</title>
        <authorList>
            <person name="Casimir C.M."/>
            <person name="Bu-Ghanim H.N."/>
            <person name="Rodaway A.R."/>
            <person name="Bentley D.L."/>
            <person name="Rowe P."/>
            <person name="Segal A.W."/>
        </authorList>
    </citation>
    <scope>NUCLEOTIDE SEQUENCE [GENOMIC DNA] OF 14-24</scope>
    <scope>INVOLVEMENT IN CHRONIC GRANULOMATOUS DISEASE</scope>
</reference>
<reference key="14">
    <citation type="submission" date="2005-12" db="EMBL/GenBank/DDBJ databases">
        <authorList>
            <consortium name="NHLBI resequencing and genotyping service (RS&amp;G)"/>
        </authorList>
    </citation>
    <scope>NUCLEOTIDE SEQUENCE [GENOMIC DNA] OF 133-390</scope>
    <scope>VARIANT ASP-166</scope>
</reference>
<reference key="15">
    <citation type="journal article" date="1993" name="Biochem. J.">
        <title>p40phox, a third cytosolic component of the activation complex of the NADPH oxidase to contain src homology 3 domains.</title>
        <authorList>
            <person name="Wientjes F.B."/>
            <person name="Hsuan J.J."/>
            <person name="Totty N.F."/>
            <person name="Segal A.W."/>
        </authorList>
    </citation>
    <scope>SUBUNIT</scope>
</reference>
<reference key="16">
    <citation type="journal article" date="1994" name="J. Biol. Chem.">
        <title>The phosphorylation of the respiratory burst oxidase component p47phox during neutrophil activation. Phosphorylation of sites recognized by protein kinase C and by proline-directed kinases.</title>
        <authorList>
            <person name="el Benna J."/>
            <person name="Faust L.P."/>
            <person name="Babior B.M."/>
        </authorList>
    </citation>
    <scope>PHOSPHORYLATION AT SER-303; SER-304; SER-320; SER-328; SER-345 AND SER-348</scope>
</reference>
<reference key="17">
    <citation type="journal article" date="1997" name="Biochem. J.">
        <title>Interaction of human neutrophil flavocytochrome b with cytosolic proteins: transferred-NOESY NMR studies of a gp91phox C-terminal peptide bound to p47phox.</title>
        <authorList>
            <person name="Adams E.R."/>
            <person name="Dratz E.A."/>
            <person name="Gizachew D."/>
            <person name="Deleo F.R."/>
            <person name="Yu L."/>
            <person name="Volpp B.D."/>
            <person name="Vlases M."/>
            <person name="Jesaitis A.J."/>
            <person name="Quinn M.T."/>
        </authorList>
    </citation>
    <scope>INTERACTION WITH CYBB</scope>
</reference>
<reference key="18">
    <citation type="journal article" date="2002" name="J. Biol. Chem.">
        <title>Involvement of TRAF4 in oxidative activation of c-Jun N-terminal kinase.</title>
        <authorList>
            <person name="Xu Y.C."/>
            <person name="Wu R.F."/>
            <person name="Gu Y."/>
            <person name="Yang Y.S."/>
            <person name="Yang M.C."/>
            <person name="Nwariaku F.E."/>
            <person name="Terada L.S."/>
        </authorList>
    </citation>
    <scope>INTERACTION WITH TRAF4</scope>
    <scope>SUBCELLULAR LOCATION</scope>
</reference>
<reference key="19">
    <citation type="journal article" date="2003" name="J. Biol. Chem.">
        <title>Novel human homologues of p47phox and p67phox participate in activation of superoxide-producing NADPH oxidases.</title>
        <authorList>
            <person name="Takeya R."/>
            <person name="Ueno N."/>
            <person name="Kami K."/>
            <person name="Taura M."/>
            <person name="Kohjima M."/>
            <person name="Izaki T."/>
            <person name="Nunoi H."/>
            <person name="Sumimoto H."/>
        </authorList>
    </citation>
    <scope>INTERACTION WITH NOXA1</scope>
</reference>
<reference key="20">
    <citation type="journal article" date="2005" name="Eur. J. Immunol.">
        <title>TRAF4 acts as a silencer in TLR-mediated signaling through the association with TRAF6 and TRIF.</title>
        <authorList>
            <person name="Takeshita F."/>
            <person name="Ishii K.J."/>
            <person name="Kobiyama K."/>
            <person name="Kojima Y."/>
            <person name="Coban C."/>
            <person name="Sasaki S."/>
            <person name="Ishii N."/>
            <person name="Klinman D.M."/>
            <person name="Okuda K."/>
            <person name="Akira S."/>
            <person name="Suzuki K."/>
        </authorList>
    </citation>
    <scope>INTERACTION WITH TRAF4</scope>
</reference>
<reference key="21">
    <citation type="journal article" date="2009" name="BMC Immunol.">
        <title>Identification of SH3 domain interaction partners of human FasL (CD178) by phage display screening.</title>
        <authorList>
            <person name="Voss M."/>
            <person name="Lettau M."/>
            <person name="Janssen O."/>
        </authorList>
    </citation>
    <scope>INTERACTION WITH FASLG</scope>
</reference>
<reference key="22">
    <citation type="journal article" date="2009" name="J. Cell. Biochem.">
        <title>Alternative splicing of ADAM15 regulates its interactions with cellular SH3 proteins.</title>
        <authorList>
            <person name="Kleino I."/>
            <person name="Ortiz R.M."/>
            <person name="Yritys M."/>
            <person name="Huovila A.P."/>
            <person name="Saksela K."/>
        </authorList>
    </citation>
    <scope>INTERACTION WITH ADAM15</scope>
</reference>
<reference key="23">
    <citation type="journal article" date="2010" name="J. Leukoc. Biol.">
        <title>Regulation of TNF-induced oxygen radical production in human neutrophils: role of delta-PKC.</title>
        <authorList>
            <person name="Kilpatrick L.E."/>
            <person name="Sun S."/>
            <person name="Li H."/>
            <person name="Vary T.C."/>
            <person name="Korchak H.M."/>
        </authorList>
    </citation>
    <scope>FUNCTION</scope>
    <scope>PHOSPHORYLATION</scope>
</reference>
<reference key="24">
    <citation type="journal article" date="2001" name="Nat. Struct. Biol.">
        <title>Solution structure of the PX domain, a target of the SH3 domain.</title>
        <authorList>
            <person name="Hiroaki H."/>
            <person name="Ago T."/>
            <person name="Ito T."/>
            <person name="Sumimoto H."/>
            <person name="Kohda D."/>
        </authorList>
    </citation>
    <scope>STRUCTURE BY NMR OF 1-128</scope>
</reference>
<reference key="25">
    <citation type="journal article" date="2002" name="EMBO J.">
        <title>Diverse recognition of non-PxxP peptide ligands by the SH3 domains from p67(phox), Grb2 and Pex13p.</title>
        <authorList>
            <person name="Kami K."/>
            <person name="Takeya R."/>
            <person name="Sumimoto H."/>
            <person name="Kohda D."/>
        </authorList>
    </citation>
    <scope>STRUCTURE BY NMR OF 359-390 IN COMPLEX WITH NCF2</scope>
    <scope>INTERACTION WITH NCF2</scope>
</reference>
<reference key="26">
    <citation type="journal article" date="2002" name="EMBO J.">
        <title>Binding of the PX domain of p47(phox) to phosphatidylinositol 3,4-bisphosphate and phosphatidic acid is masked by an intramolecular interaction.</title>
        <authorList>
            <person name="Karathanassis D."/>
            <person name="Stahelin R.V."/>
            <person name="Bravo J."/>
            <person name="Perisic O."/>
            <person name="Pacold C.M."/>
            <person name="Cho W."/>
            <person name="Williams R.L."/>
        </authorList>
    </citation>
    <scope>X-RAY CRYSTALLOGRAPHY (2.00 ANGSTROMS) OF 1-123</scope>
    <scope>DOMAIN</scope>
    <scope>LIPID-BINDING</scope>
    <scope>SUBCELLULAR LOCATION</scope>
    <scope>MUTAGENESIS OF ARG-43; ARG-90; TRP-263; SER-303; SER-304; SER-328; SER-359 AND SER-370</scope>
</reference>
<reference key="27">
    <citation type="journal article" date="2003" name="Cell">
        <title>Molecular basis of phosphorylation-induced activation of the NADPH oxidase.</title>
        <authorList>
            <person name="Groemping Y."/>
            <person name="Lapouge K."/>
            <person name="Smerdon S.J."/>
            <person name="Rittinger K."/>
        </authorList>
    </citation>
    <scope>X-RAY CRYSTALLOGRAPHY (1.70 ANGSTROMS) OF 156-340</scope>
    <scope>DOMAIN</scope>
    <scope>INTERACTION WITH CYBA</scope>
</reference>
<reference key="28">
    <citation type="journal article" date="2004" name="Genes Cells">
        <title>A molecular mechanism for autoinhibition of the tandem SH3 domains of p47phox, the regulatory subunit of the phagocyte NADPH oxidase.</title>
        <authorList>
            <person name="Yuzawa S."/>
            <person name="Suzuki N.N."/>
            <person name="Fujioka Y."/>
            <person name="Ogura K."/>
            <person name="Sumimoto H."/>
            <person name="Inagaki F."/>
        </authorList>
    </citation>
    <scope>X-RAY CRYSTALLOGRAPHY (1.82 ANGSTROMS) OF 151-340</scope>
</reference>
<reference key="29">
    <citation type="journal article" date="2005" name="J. Biol. Chem.">
        <title>Effects of p47phox C terminus phosphorylations on binding interactions with p40phox and p67phox. Structural and functional comparison of p40phox and p67phox SH3 domains.</title>
        <authorList>
            <person name="Massenet C."/>
            <person name="Chenavas S."/>
            <person name="Cohen-Addad C."/>
            <person name="Dagher M.-C."/>
            <person name="Brandolin G."/>
            <person name="Pebay-Peyroula E."/>
            <person name="Fieschi F."/>
        </authorList>
    </citation>
    <scope>X-RAY CRYSTALLOGRAPHY (1.46 ANGSTROMS) OF 360-372 IN COMPLEX WITH NCF4</scope>
    <scope>SUBUNIT</scope>
</reference>
<reference key="30">
    <citation type="journal article" date="2006" name="J. Biol. Chem.">
        <title>NMR solution structure of the tandem Src homology 3 domains of p47phox complexed with a p22phox-derived proline-rich peptide.</title>
        <authorList>
            <person name="Ogura K."/>
            <person name="Nobuhisa I."/>
            <person name="Yuzawa S."/>
            <person name="Takeya R."/>
            <person name="Torikai S."/>
            <person name="Saikawa K."/>
            <person name="Sumimoto H."/>
            <person name="Inagaki F."/>
        </authorList>
    </citation>
    <scope>STRUCTURE BY NMR OF 151-286 IN COMPLEX WITH CYBA</scope>
    <scope>INTERACTION WITH CYBA</scope>
</reference>
<reference evidence="36" key="31">
    <citation type="journal article" date="2024" name="Nature">
        <title>Structure of human phagocyte NADPH oxidase in the activated state.</title>
        <authorList>
            <person name="Liu X."/>
            <person name="Shi Y."/>
            <person name="Liu R."/>
            <person name="Song K."/>
            <person name="Chen L."/>
        </authorList>
    </citation>
    <scope>STRUCTURE BY ELECTRON MICROSCOPY (2.79 ANGSTROMS) OF 1-286 IN COMPLEX WITH CYBA; CYBB; NFC2 AND RAC1</scope>
    <scope>SUBUNIT</scope>
    <scope>FUNCTION</scope>
    <scope>IDENTIFICATION OF THE NADPH OXIDASE COMPLEX</scope>
</reference>
<reference key="32">
    <citation type="journal article" date="2001" name="Blood">
        <title>Autosomal recessive chronic granulomatous disease caused by defects in NCF1, the gene encoding the phagocyte p47-phox: mutations not arising in the NCF1 pseudogenes.</title>
        <authorList>
            <person name="Noack D."/>
            <person name="Rae J."/>
            <person name="Cross A.R."/>
            <person name="Ellis B.A."/>
            <person name="Newburger P.E."/>
            <person name="Curnutte J.T."/>
            <person name="Heyworth P.G."/>
        </authorList>
    </citation>
    <scope>INVOLVEMENT IN CGD1</scope>
    <scope>VARIANT CGD1 GLN-42</scope>
    <scope>VARIANT SER-262</scope>
</reference>
<reference key="33">
    <citation type="journal article" date="2013" name="J. Allergy Clin. Immunol.">
        <title>Clinical, functional, and genetic characterization of chronic granulomatous disease in 89 Turkish patients.</title>
        <authorList>
            <person name="Koker M.Y."/>
            <person name="Camcioglu Y."/>
            <person name="van Leeuwen K."/>
            <person name="Kilic S.S."/>
            <person name="Barlan I."/>
            <person name="Yilmaz M."/>
            <person name="Metin A."/>
            <person name="de Boer M."/>
            <person name="Avcilar H."/>
            <person name="Patiroglu T."/>
            <person name="Yildiran A."/>
            <person name="Yegin O."/>
            <person name="Tezcan I."/>
            <person name="Sanal O."/>
            <person name="Roos D."/>
        </authorList>
    </citation>
    <scope>INVOLVEMENT IN CGD1</scope>
</reference>
<reference key="34">
    <citation type="journal article" date="2017" name="Nat. Genet.">
        <title>A missense variant in NCF1 is associated with susceptibility to multiple autoimmune diseases.</title>
        <authorList>
            <person name="Zhao J."/>
            <person name="Ma J."/>
            <person name="Deng Y."/>
            <person name="Kelly J.A."/>
            <person name="Kim K."/>
            <person name="Bang S.Y."/>
            <person name="Lee H.S."/>
            <person name="Li Q.Z."/>
            <person name="Wakeland E.K."/>
            <person name="Qiu R."/>
            <person name="Liu M."/>
            <person name="Guo J."/>
            <person name="Li Z."/>
            <person name="Tan W."/>
            <person name="Rasmussen A."/>
            <person name="Lessard C.J."/>
            <person name="Sivils K.L."/>
            <person name="Hahn B.H."/>
            <person name="Grossman J.M."/>
            <person name="Kamen D.L."/>
            <person name="Gilkeson G.S."/>
            <person name="Bae S.C."/>
            <person name="Gaffney P.M."/>
            <person name="Shen N."/>
            <person name="Tsao B.P."/>
        </authorList>
    </citation>
    <scope>VARIANT HIS-90</scope>
</reference>
<dbReference type="EMBL" id="M25665">
    <property type="protein sequence ID" value="AAA57209.1"/>
    <property type="molecule type" value="mRNA"/>
</dbReference>
<dbReference type="EMBL" id="M55067">
    <property type="protein sequence ID" value="AAA59901.1"/>
    <property type="molecule type" value="mRNA"/>
</dbReference>
<dbReference type="EMBL" id="AH005796">
    <property type="protein sequence ID" value="AAB95193.1"/>
    <property type="molecule type" value="Genomic_DNA"/>
</dbReference>
<dbReference type="EMBL" id="AF184614">
    <property type="protein sequence ID" value="AAF34737.1"/>
    <property type="molecule type" value="Genomic_DNA"/>
</dbReference>
<dbReference type="EMBL" id="AF330625">
    <property type="protein sequence ID" value="AAK19516.1"/>
    <property type="molecule type" value="mRNA"/>
</dbReference>
<dbReference type="EMBL" id="AF330626">
    <property type="protein sequence ID" value="AAK19517.1"/>
    <property type="molecule type" value="mRNA"/>
</dbReference>
<dbReference type="EMBL" id="AF330627">
    <property type="protein sequence ID" value="AAK19518.1"/>
    <property type="molecule type" value="mRNA"/>
</dbReference>
<dbReference type="EMBL" id="AK127905">
    <property type="protein sequence ID" value="BAG54596.1"/>
    <property type="status" value="ALT_INIT"/>
    <property type="molecule type" value="mRNA"/>
</dbReference>
<dbReference type="EMBL" id="AK292094">
    <property type="protein sequence ID" value="BAF84783.1"/>
    <property type="status" value="ALT_INIT"/>
    <property type="molecule type" value="mRNA"/>
</dbReference>
<dbReference type="EMBL" id="AK223217">
    <property type="protein sequence ID" value="BAD96937.1"/>
    <property type="molecule type" value="mRNA"/>
</dbReference>
<dbReference type="EMBL" id="AC004883">
    <property type="status" value="NOT_ANNOTATED_CDS"/>
    <property type="molecule type" value="Genomic_DNA"/>
</dbReference>
<dbReference type="EMBL" id="AC083884">
    <property type="protein sequence ID" value="AAS07465.1"/>
    <property type="molecule type" value="Genomic_DNA"/>
</dbReference>
<dbReference type="EMBL" id="AC124781">
    <property type="status" value="NOT_ANNOTATED_CDS"/>
    <property type="molecule type" value="Genomic_DNA"/>
</dbReference>
<dbReference type="EMBL" id="BC002816">
    <property type="protein sequence ID" value="AAH02816.1"/>
    <property type="molecule type" value="mRNA"/>
</dbReference>
<dbReference type="EMBL" id="BC065731">
    <property type="protein sequence ID" value="AAH65731.1"/>
    <property type="molecule type" value="mRNA"/>
</dbReference>
<dbReference type="EMBL" id="U25793">
    <property type="protein sequence ID" value="AAA93232.1"/>
    <property type="molecule type" value="mRNA"/>
</dbReference>
<dbReference type="EMBL" id="DQ314878">
    <property type="protein sequence ID" value="ABC40737.1"/>
    <property type="molecule type" value="Genomic_DNA"/>
</dbReference>
<dbReference type="CCDS" id="CCDS34657.1">
    <molecule id="P14598-1"/>
</dbReference>
<dbReference type="PIR" id="A35926">
    <property type="entry name" value="A39249"/>
</dbReference>
<dbReference type="RefSeq" id="NP_000256.4">
    <molecule id="P14598-1"/>
    <property type="nucleotide sequence ID" value="NM_000265.7"/>
</dbReference>
<dbReference type="PDB" id="1GD5">
    <property type="method" value="NMR"/>
    <property type="chains" value="A=1-128"/>
</dbReference>
<dbReference type="PDB" id="1K4U">
    <property type="method" value="NMR"/>
    <property type="chains" value="P=359-390"/>
</dbReference>
<dbReference type="PDB" id="1KQ6">
    <property type="method" value="X-ray"/>
    <property type="resolution" value="1.18 A"/>
    <property type="chains" value="A=1-141"/>
</dbReference>
<dbReference type="PDB" id="1NG2">
    <property type="method" value="X-ray"/>
    <property type="resolution" value="1.70 A"/>
    <property type="chains" value="A=156-340"/>
</dbReference>
<dbReference type="PDB" id="1O7K">
    <property type="method" value="X-ray"/>
    <property type="resolution" value="2.00 A"/>
    <property type="chains" value="A/B/C=1-123"/>
</dbReference>
<dbReference type="PDB" id="1OV3">
    <property type="method" value="X-ray"/>
    <property type="resolution" value="1.80 A"/>
    <property type="chains" value="A/B=156-285"/>
</dbReference>
<dbReference type="PDB" id="1UEC">
    <property type="method" value="X-ray"/>
    <property type="resolution" value="1.82 A"/>
    <property type="chains" value="A=151-340"/>
</dbReference>
<dbReference type="PDB" id="1W70">
    <property type="method" value="X-ray"/>
    <property type="resolution" value="1.46 A"/>
    <property type="chains" value="C/D=360-372"/>
</dbReference>
<dbReference type="PDB" id="1WLP">
    <property type="method" value="NMR"/>
    <property type="chains" value="B=151-286"/>
</dbReference>
<dbReference type="PDB" id="7YXW">
    <property type="method" value="X-ray"/>
    <property type="resolution" value="2.50 A"/>
    <property type="chains" value="A=156-285"/>
</dbReference>
<dbReference type="PDB" id="8WEJ">
    <property type="method" value="EM"/>
    <property type="resolution" value="2.79 A"/>
    <property type="chains" value="C=1-286"/>
</dbReference>
<dbReference type="PDBsum" id="1GD5"/>
<dbReference type="PDBsum" id="1K4U"/>
<dbReference type="PDBsum" id="1KQ6"/>
<dbReference type="PDBsum" id="1NG2"/>
<dbReference type="PDBsum" id="1O7K"/>
<dbReference type="PDBsum" id="1OV3"/>
<dbReference type="PDBsum" id="1UEC"/>
<dbReference type="PDBsum" id="1W70"/>
<dbReference type="PDBsum" id="1WLP"/>
<dbReference type="PDBsum" id="7YXW"/>
<dbReference type="PDBsum" id="8WEJ"/>
<dbReference type="BMRB" id="P14598"/>
<dbReference type="EMDB" id="EMD-37477"/>
<dbReference type="SASBDB" id="P14598"/>
<dbReference type="SMR" id="P14598"/>
<dbReference type="BioGRID" id="575724">
    <property type="interactions" value="91"/>
</dbReference>
<dbReference type="ComplexPortal" id="CPX-1017">
    <property type="entry name" value="Phagocyte NADPH oxidase complex, RAC1 variant"/>
</dbReference>
<dbReference type="ComplexPortal" id="CPX-6134">
    <property type="entry name" value="Phagocyte NADPH oxidase complex, RAC2 variant"/>
</dbReference>
<dbReference type="ComplexPortal" id="CPX-6135">
    <property type="entry name" value="Phagocyte NADPH oxidase complex, RAC3 variant"/>
</dbReference>
<dbReference type="CORUM" id="P14598"/>
<dbReference type="DIP" id="DIP-126N"/>
<dbReference type="ELM" id="P14598"/>
<dbReference type="FunCoup" id="P14598">
    <property type="interactions" value="533"/>
</dbReference>
<dbReference type="IntAct" id="P14598">
    <property type="interactions" value="68"/>
</dbReference>
<dbReference type="MINT" id="P14598"/>
<dbReference type="STRING" id="9606.ENSP00000289473"/>
<dbReference type="BindingDB" id="P14598"/>
<dbReference type="ChEMBL" id="CHEMBL1613743"/>
<dbReference type="DrugBank" id="DB00514">
    <property type="generic name" value="Dextromethorphan"/>
</dbReference>
<dbReference type="iPTMnet" id="P14598"/>
<dbReference type="PhosphoSitePlus" id="P14598"/>
<dbReference type="BioMuta" id="NCF1"/>
<dbReference type="DMDM" id="325511390"/>
<dbReference type="jPOST" id="P14598"/>
<dbReference type="MassIVE" id="P14598"/>
<dbReference type="PaxDb" id="9606-ENSP00000289473"/>
<dbReference type="PeptideAtlas" id="P14598"/>
<dbReference type="ProteomicsDB" id="53060">
    <molecule id="P14598-1"/>
</dbReference>
<dbReference type="ProteomicsDB" id="53061">
    <molecule id="P14598-2"/>
</dbReference>
<dbReference type="Pumba" id="P14598"/>
<dbReference type="Antibodypedia" id="3863">
    <property type="antibodies" value="934 antibodies from 38 providers"/>
</dbReference>
<dbReference type="DNASU" id="653361"/>
<dbReference type="Ensembl" id="ENST00000289473.11">
    <molecule id="P14598-1"/>
    <property type="protein sequence ID" value="ENSP00000289473.4"/>
    <property type="gene ID" value="ENSG00000158517.16"/>
</dbReference>
<dbReference type="GeneID" id="653361"/>
<dbReference type="KEGG" id="hsa:653361"/>
<dbReference type="MANE-Select" id="ENST00000289473.11">
    <property type="protein sequence ID" value="ENSP00000289473.4"/>
    <property type="RefSeq nucleotide sequence ID" value="NM_000265.7"/>
    <property type="RefSeq protein sequence ID" value="NP_000256.4"/>
</dbReference>
<dbReference type="UCSC" id="uc003ubb.5">
    <molecule id="P14598-1"/>
    <property type="organism name" value="human"/>
</dbReference>
<dbReference type="AGR" id="HGNC:7660"/>
<dbReference type="CTD" id="653361"/>
<dbReference type="DisGeNET" id="653361"/>
<dbReference type="GeneCards" id="NCF1"/>
<dbReference type="GeneReviews" id="NCF1"/>
<dbReference type="HGNC" id="HGNC:7660">
    <property type="gene designation" value="NCF1"/>
</dbReference>
<dbReference type="HPA" id="ENSG00000158517">
    <property type="expression patterns" value="Tissue enhanced (bone marrow, lymphoid tissue)"/>
</dbReference>
<dbReference type="MalaCards" id="NCF1"/>
<dbReference type="MIM" id="233700">
    <property type="type" value="phenotype"/>
</dbReference>
<dbReference type="MIM" id="608512">
    <property type="type" value="gene"/>
</dbReference>
<dbReference type="neXtProt" id="NX_P14598"/>
<dbReference type="OpenTargets" id="ENSG00000158517"/>
<dbReference type="Orphanet" id="379">
    <property type="disease" value="Chronic granulomatous disease"/>
</dbReference>
<dbReference type="Orphanet" id="904">
    <property type="disease" value="Williams syndrome"/>
</dbReference>
<dbReference type="PharmGKB" id="PA31463"/>
<dbReference type="VEuPathDB" id="HostDB:ENSG00000158517"/>
<dbReference type="eggNOG" id="KOG4773">
    <property type="taxonomic scope" value="Eukaryota"/>
</dbReference>
<dbReference type="GeneTree" id="ENSGT00940000160014"/>
<dbReference type="HOGENOM" id="CLU_030529_0_0_1"/>
<dbReference type="InParanoid" id="P14598"/>
<dbReference type="OMA" id="NSVKYMQ"/>
<dbReference type="OrthoDB" id="10255964at2759"/>
<dbReference type="PAN-GO" id="P14598">
    <property type="GO annotations" value="5 GO annotations based on evolutionary models"/>
</dbReference>
<dbReference type="PhylomeDB" id="P14598"/>
<dbReference type="TreeFam" id="TF329347"/>
<dbReference type="PathwayCommons" id="P14598"/>
<dbReference type="Reactome" id="R-HSA-1222556">
    <property type="pathway name" value="ROS and RNS production in phagocytes"/>
</dbReference>
<dbReference type="Reactome" id="R-HSA-1236973">
    <property type="pathway name" value="Cross-presentation of particulate exogenous antigens (phagosomes)"/>
</dbReference>
<dbReference type="Reactome" id="R-HSA-3299685">
    <property type="pathway name" value="Detoxification of Reactive Oxygen Species"/>
</dbReference>
<dbReference type="Reactome" id="R-HSA-4420097">
    <property type="pathway name" value="VEGFA-VEGFR2 Pathway"/>
</dbReference>
<dbReference type="Reactome" id="R-HSA-5668599">
    <property type="pathway name" value="RHO GTPases Activate NADPH Oxidases"/>
</dbReference>
<dbReference type="Reactome" id="R-HSA-9013149">
    <property type="pathway name" value="RAC1 GTPase cycle"/>
</dbReference>
<dbReference type="Reactome" id="R-HSA-9013404">
    <property type="pathway name" value="RAC2 GTPase cycle"/>
</dbReference>
<dbReference type="Reactome" id="R-HSA-9013423">
    <property type="pathway name" value="RAC3 GTPase cycle"/>
</dbReference>
<dbReference type="SignaLink" id="P14598"/>
<dbReference type="SIGNOR" id="P14598"/>
<dbReference type="BioGRID-ORCS" id="653361">
    <property type="hits" value="57 hits in 1135 CRISPR screens"/>
</dbReference>
<dbReference type="ChiTaRS" id="NCF1">
    <property type="organism name" value="human"/>
</dbReference>
<dbReference type="EvolutionaryTrace" id="P14598"/>
<dbReference type="GeneWiki" id="Neutrophil_cytosolic_factor_1"/>
<dbReference type="GenomeRNAi" id="653361"/>
<dbReference type="Pharos" id="P14598">
    <property type="development level" value="Tbio"/>
</dbReference>
<dbReference type="PRO" id="PR:P14598"/>
<dbReference type="Proteomes" id="UP000005640">
    <property type="component" value="Chromosome 7"/>
</dbReference>
<dbReference type="RNAct" id="P14598">
    <property type="molecule type" value="protein"/>
</dbReference>
<dbReference type="Bgee" id="ENSG00000158517">
    <property type="expression patterns" value="Expressed in granulocyte and 100 other cell types or tissues"/>
</dbReference>
<dbReference type="ExpressionAtlas" id="P14598">
    <property type="expression patterns" value="baseline and differential"/>
</dbReference>
<dbReference type="GO" id="GO:0005737">
    <property type="term" value="C:cytoplasm"/>
    <property type="evidence" value="ECO:0000318"/>
    <property type="project" value="GO_Central"/>
</dbReference>
<dbReference type="GO" id="GO:0009898">
    <property type="term" value="C:cytoplasmic side of plasma membrane"/>
    <property type="evidence" value="ECO:0000314"/>
    <property type="project" value="UniProtKB"/>
</dbReference>
<dbReference type="GO" id="GO:0005829">
    <property type="term" value="C:cytosol"/>
    <property type="evidence" value="ECO:0000314"/>
    <property type="project" value="UniProtKB"/>
</dbReference>
<dbReference type="GO" id="GO:0030425">
    <property type="term" value="C:dendrite"/>
    <property type="evidence" value="ECO:0007669"/>
    <property type="project" value="Ensembl"/>
</dbReference>
<dbReference type="GO" id="GO:0016020">
    <property type="term" value="C:membrane"/>
    <property type="evidence" value="ECO:0000314"/>
    <property type="project" value="UniProtKB"/>
</dbReference>
<dbReference type="GO" id="GO:0043020">
    <property type="term" value="C:NADPH oxidase complex"/>
    <property type="evidence" value="ECO:0000314"/>
    <property type="project" value="UniProtKB"/>
</dbReference>
<dbReference type="GO" id="GO:0043025">
    <property type="term" value="C:neuronal cell body"/>
    <property type="evidence" value="ECO:0007669"/>
    <property type="project" value="Ensembl"/>
</dbReference>
<dbReference type="GO" id="GO:0032010">
    <property type="term" value="C:phagolysosome"/>
    <property type="evidence" value="ECO:0000304"/>
    <property type="project" value="Reactome"/>
</dbReference>
<dbReference type="GO" id="GO:0005886">
    <property type="term" value="C:plasma membrane"/>
    <property type="evidence" value="ECO:0000314"/>
    <property type="project" value="CAFA"/>
</dbReference>
<dbReference type="GO" id="GO:0009055">
    <property type="term" value="F:electron transfer activity"/>
    <property type="evidence" value="ECO:0000304"/>
    <property type="project" value="UniProtKB"/>
</dbReference>
<dbReference type="GO" id="GO:0035091">
    <property type="term" value="F:phosphatidylinositol binding"/>
    <property type="evidence" value="ECO:0000314"/>
    <property type="project" value="UniProtKB"/>
</dbReference>
<dbReference type="GO" id="GO:0043325">
    <property type="term" value="F:phosphatidylinositol-3,4-bisphosphate binding"/>
    <property type="evidence" value="ECO:0000314"/>
    <property type="project" value="UniProtKB"/>
</dbReference>
<dbReference type="GO" id="GO:0017124">
    <property type="term" value="F:SH3 domain binding"/>
    <property type="evidence" value="ECO:0000353"/>
    <property type="project" value="BHF-UCL"/>
</dbReference>
<dbReference type="GO" id="GO:0016175">
    <property type="term" value="F:superoxide-generating NAD(P)H oxidase activity"/>
    <property type="evidence" value="ECO:0000315"/>
    <property type="project" value="CAFA"/>
</dbReference>
<dbReference type="GO" id="GO:0016176">
    <property type="term" value="F:superoxide-generating NADPH oxidase activator activity"/>
    <property type="evidence" value="ECO:0000318"/>
    <property type="project" value="GO_Central"/>
</dbReference>
<dbReference type="GO" id="GO:0006968">
    <property type="term" value="P:cellular defense response"/>
    <property type="evidence" value="ECO:0000304"/>
    <property type="project" value="ProtInc"/>
</dbReference>
<dbReference type="GO" id="GO:0071333">
    <property type="term" value="P:cellular response to glucose stimulus"/>
    <property type="evidence" value="ECO:0007669"/>
    <property type="project" value="Ensembl"/>
</dbReference>
<dbReference type="GO" id="GO:0071394">
    <property type="term" value="P:cellular response to testosterone stimulus"/>
    <property type="evidence" value="ECO:0007669"/>
    <property type="project" value="Ensembl"/>
</dbReference>
<dbReference type="GO" id="GO:0050673">
    <property type="term" value="P:epithelial cell proliferation"/>
    <property type="evidence" value="ECO:0007669"/>
    <property type="project" value="Ensembl"/>
</dbReference>
<dbReference type="GO" id="GO:0050665">
    <property type="term" value="P:hydrogen peroxide biosynthetic process"/>
    <property type="evidence" value="ECO:0007669"/>
    <property type="project" value="Ensembl"/>
</dbReference>
<dbReference type="GO" id="GO:0006954">
    <property type="term" value="P:inflammatory response"/>
    <property type="evidence" value="ECO:0007669"/>
    <property type="project" value="Ensembl"/>
</dbReference>
<dbReference type="GO" id="GO:0045087">
    <property type="term" value="P:innate immune response"/>
    <property type="evidence" value="ECO:0000304"/>
    <property type="project" value="BHF-UCL"/>
</dbReference>
<dbReference type="GO" id="GO:0006691">
    <property type="term" value="P:leukotriene metabolic process"/>
    <property type="evidence" value="ECO:0007669"/>
    <property type="project" value="Ensembl"/>
</dbReference>
<dbReference type="GO" id="GO:0070947">
    <property type="term" value="P:neutrophil-mediated killing of fungus"/>
    <property type="evidence" value="ECO:0007669"/>
    <property type="project" value="Ensembl"/>
</dbReference>
<dbReference type="GO" id="GO:0070946">
    <property type="term" value="P:neutrophil-mediated killing of gram-positive bacterium"/>
    <property type="evidence" value="ECO:0007669"/>
    <property type="project" value="Ensembl"/>
</dbReference>
<dbReference type="GO" id="GO:0006612">
    <property type="term" value="P:protein targeting to membrane"/>
    <property type="evidence" value="ECO:0000314"/>
    <property type="project" value="UniProtKB"/>
</dbReference>
<dbReference type="GO" id="GO:0060264">
    <property type="term" value="P:regulation of respiratory burst involved in inflammatory response"/>
    <property type="evidence" value="ECO:0007669"/>
    <property type="project" value="Ensembl"/>
</dbReference>
<dbReference type="GO" id="GO:0045730">
    <property type="term" value="P:respiratory burst"/>
    <property type="evidence" value="ECO:0000318"/>
    <property type="project" value="GO_Central"/>
</dbReference>
<dbReference type="GO" id="GO:0002679">
    <property type="term" value="P:respiratory burst involved in defense response"/>
    <property type="evidence" value="ECO:0007669"/>
    <property type="project" value="Ensembl"/>
</dbReference>
<dbReference type="GO" id="GO:0001878">
    <property type="term" value="P:response to yeast"/>
    <property type="evidence" value="ECO:0007669"/>
    <property type="project" value="Ensembl"/>
</dbReference>
<dbReference type="GO" id="GO:0042554">
    <property type="term" value="P:superoxide anion generation"/>
    <property type="evidence" value="ECO:0000314"/>
    <property type="project" value="UniProtKB"/>
</dbReference>
<dbReference type="GO" id="GO:0006801">
    <property type="term" value="P:superoxide metabolic process"/>
    <property type="evidence" value="ECO:0000304"/>
    <property type="project" value="BHF-UCL"/>
</dbReference>
<dbReference type="CDD" id="cd06887">
    <property type="entry name" value="PX_p47phox"/>
    <property type="match status" value="1"/>
</dbReference>
<dbReference type="CDD" id="cd12021">
    <property type="entry name" value="SH3_p47phox_1"/>
    <property type="match status" value="1"/>
</dbReference>
<dbReference type="CDD" id="cd12022">
    <property type="entry name" value="SH3_p47phox_2"/>
    <property type="match status" value="1"/>
</dbReference>
<dbReference type="DisProt" id="DP02254"/>
<dbReference type="FunFam" id="2.30.30.40:FF:000121">
    <property type="entry name" value="Neutrophil cytosol factor 1"/>
    <property type="match status" value="1"/>
</dbReference>
<dbReference type="FunFam" id="3.30.1520.10:FF:000023">
    <property type="entry name" value="Neutrophil cytosol factor 1"/>
    <property type="match status" value="1"/>
</dbReference>
<dbReference type="FunFam" id="2.30.30.40:FF:000127">
    <property type="entry name" value="neutrophil cytosol factor 1"/>
    <property type="match status" value="1"/>
</dbReference>
<dbReference type="Gene3D" id="3.30.1520.10">
    <property type="entry name" value="Phox-like domain"/>
    <property type="match status" value="1"/>
</dbReference>
<dbReference type="Gene3D" id="2.30.30.40">
    <property type="entry name" value="SH3 Domains"/>
    <property type="match status" value="2"/>
</dbReference>
<dbReference type="IDEAL" id="IID00597"/>
<dbReference type="InterPro" id="IPR051228">
    <property type="entry name" value="NADPH_Oxidase/PX-Domain"/>
</dbReference>
<dbReference type="InterPro" id="IPR015039">
    <property type="entry name" value="NCF1_C"/>
</dbReference>
<dbReference type="InterPro" id="IPR032136">
    <property type="entry name" value="NCF1_PBR/AIR"/>
</dbReference>
<dbReference type="InterPro" id="IPR035756">
    <property type="entry name" value="NCF1_SH3_1"/>
</dbReference>
<dbReference type="InterPro" id="IPR035757">
    <property type="entry name" value="NCF1_SH3_2"/>
</dbReference>
<dbReference type="InterPro" id="IPR001655">
    <property type="entry name" value="P47PHOX"/>
</dbReference>
<dbReference type="InterPro" id="IPR001683">
    <property type="entry name" value="PX_dom"/>
</dbReference>
<dbReference type="InterPro" id="IPR036871">
    <property type="entry name" value="PX_dom_sf"/>
</dbReference>
<dbReference type="InterPro" id="IPR034909">
    <property type="entry name" value="PX_p47phox"/>
</dbReference>
<dbReference type="InterPro" id="IPR036028">
    <property type="entry name" value="SH3-like_dom_sf"/>
</dbReference>
<dbReference type="InterPro" id="IPR001452">
    <property type="entry name" value="SH3_domain"/>
</dbReference>
<dbReference type="PANTHER" id="PTHR15706:SF6">
    <property type="entry name" value="NEUTROPHIL CYTOSOL FACTOR 1-RELATED"/>
    <property type="match status" value="1"/>
</dbReference>
<dbReference type="PANTHER" id="PTHR15706">
    <property type="entry name" value="SH3 MULTIPLE DOMAIN"/>
    <property type="match status" value="1"/>
</dbReference>
<dbReference type="Pfam" id="PF16621">
    <property type="entry name" value="NCF1_PBR_AIR"/>
    <property type="match status" value="1"/>
</dbReference>
<dbReference type="Pfam" id="PF08944">
    <property type="entry name" value="p47_phox_C"/>
    <property type="match status" value="1"/>
</dbReference>
<dbReference type="Pfam" id="PF00787">
    <property type="entry name" value="PX"/>
    <property type="match status" value="1"/>
</dbReference>
<dbReference type="Pfam" id="PF00018">
    <property type="entry name" value="SH3_1"/>
    <property type="match status" value="2"/>
</dbReference>
<dbReference type="PRINTS" id="PR00498">
    <property type="entry name" value="P47PHOX"/>
</dbReference>
<dbReference type="SMART" id="SM00312">
    <property type="entry name" value="PX"/>
    <property type="match status" value="1"/>
</dbReference>
<dbReference type="SMART" id="SM00326">
    <property type="entry name" value="SH3"/>
    <property type="match status" value="2"/>
</dbReference>
<dbReference type="SUPFAM" id="SSF64268">
    <property type="entry name" value="PX domain"/>
    <property type="match status" value="1"/>
</dbReference>
<dbReference type="SUPFAM" id="SSF50044">
    <property type="entry name" value="SH3-domain"/>
    <property type="match status" value="2"/>
</dbReference>
<dbReference type="PROSITE" id="PS50195">
    <property type="entry name" value="PX"/>
    <property type="match status" value="1"/>
</dbReference>
<dbReference type="PROSITE" id="PS50002">
    <property type="entry name" value="SH3"/>
    <property type="match status" value="2"/>
</dbReference>
<proteinExistence type="evidence at protein level"/>
<name>NCF1_HUMAN</name>
<accession>P14598</accession>
<accession>A6NEH2</accession>
<accession>A8K7S9</accession>
<accession>O43842</accession>
<accession>Q2PP07</accession>
<accession>Q53FR5</accession>
<accession>Q9BU90</accession>
<accession>Q9BXI7</accession>
<accession>Q9BXI8</accession>
<accession>Q9UDV9</accession>
<accession>Q9UMU2</accession>
<organism>
    <name type="scientific">Homo sapiens</name>
    <name type="common">Human</name>
    <dbReference type="NCBI Taxonomy" id="9606"/>
    <lineage>
        <taxon>Eukaryota</taxon>
        <taxon>Metazoa</taxon>
        <taxon>Chordata</taxon>
        <taxon>Craniata</taxon>
        <taxon>Vertebrata</taxon>
        <taxon>Euteleostomi</taxon>
        <taxon>Mammalia</taxon>
        <taxon>Eutheria</taxon>
        <taxon>Euarchontoglires</taxon>
        <taxon>Primates</taxon>
        <taxon>Haplorrhini</taxon>
        <taxon>Catarrhini</taxon>
        <taxon>Hominidae</taxon>
        <taxon>Homo</taxon>
    </lineage>
</organism>
<evidence type="ECO:0000250" key="1">
    <source>
        <dbReference type="UniProtKB" id="Q09014"/>
    </source>
</evidence>
<evidence type="ECO:0000255" key="2">
    <source>
        <dbReference type="PROSITE-ProRule" id="PRU00147"/>
    </source>
</evidence>
<evidence type="ECO:0000255" key="3">
    <source>
        <dbReference type="PROSITE-ProRule" id="PRU00192"/>
    </source>
</evidence>
<evidence type="ECO:0000256" key="4">
    <source>
        <dbReference type="SAM" id="MobiDB-lite"/>
    </source>
</evidence>
<evidence type="ECO:0000269" key="5">
    <source>
    </source>
</evidence>
<evidence type="ECO:0000269" key="6">
    <source>
    </source>
</evidence>
<evidence type="ECO:0000269" key="7">
    <source>
    </source>
</evidence>
<evidence type="ECO:0000269" key="8">
    <source>
    </source>
</evidence>
<evidence type="ECO:0000269" key="9">
    <source>
    </source>
</evidence>
<evidence type="ECO:0000269" key="10">
    <source>
    </source>
</evidence>
<evidence type="ECO:0000269" key="11">
    <source>
    </source>
</evidence>
<evidence type="ECO:0000269" key="12">
    <source>
    </source>
</evidence>
<evidence type="ECO:0000269" key="13">
    <source>
    </source>
</evidence>
<evidence type="ECO:0000269" key="14">
    <source>
    </source>
</evidence>
<evidence type="ECO:0000269" key="15">
    <source>
    </source>
</evidence>
<evidence type="ECO:0000269" key="16">
    <source>
    </source>
</evidence>
<evidence type="ECO:0000269" key="17">
    <source>
    </source>
</evidence>
<evidence type="ECO:0000269" key="18">
    <source>
    </source>
</evidence>
<evidence type="ECO:0000269" key="19">
    <source>
    </source>
</evidence>
<evidence type="ECO:0000269" key="20">
    <source>
    </source>
</evidence>
<evidence type="ECO:0000269" key="21">
    <source>
    </source>
</evidence>
<evidence type="ECO:0000269" key="22">
    <source>
    </source>
</evidence>
<evidence type="ECO:0000269" key="23">
    <source>
    </source>
</evidence>
<evidence type="ECO:0000269" key="24">
    <source>
    </source>
</evidence>
<evidence type="ECO:0000269" key="25">
    <source>
    </source>
</evidence>
<evidence type="ECO:0000269" key="26">
    <source>
    </source>
</evidence>
<evidence type="ECO:0000269" key="27">
    <source>
    </source>
</evidence>
<evidence type="ECO:0000269" key="28">
    <source>
    </source>
</evidence>
<evidence type="ECO:0000269" key="29">
    <source>
    </source>
</evidence>
<evidence type="ECO:0000269" key="30">
    <source>
    </source>
</evidence>
<evidence type="ECO:0000269" key="31">
    <source ref="14"/>
</evidence>
<evidence type="ECO:0000303" key="32">
    <source>
    </source>
</evidence>
<evidence type="ECO:0000303" key="33">
    <source>
    </source>
</evidence>
<evidence type="ECO:0000305" key="34"/>
<evidence type="ECO:0000312" key="35">
    <source>
        <dbReference type="HGNC" id="HGNC:7660"/>
    </source>
</evidence>
<evidence type="ECO:0007744" key="36">
    <source>
        <dbReference type="PDB" id="8WEJ"/>
    </source>
</evidence>
<evidence type="ECO:0007829" key="37">
    <source>
        <dbReference type="PDB" id="1K4U"/>
    </source>
</evidence>
<evidence type="ECO:0007829" key="38">
    <source>
        <dbReference type="PDB" id="1KQ6"/>
    </source>
</evidence>
<evidence type="ECO:0007829" key="39">
    <source>
        <dbReference type="PDB" id="1NG2"/>
    </source>
</evidence>
<evidence type="ECO:0007829" key="40">
    <source>
        <dbReference type="PDB" id="1O7K"/>
    </source>
</evidence>
<evidence type="ECO:0007829" key="41">
    <source>
        <dbReference type="PDB" id="1OV3"/>
    </source>
</evidence>
<evidence type="ECO:0007829" key="42">
    <source>
        <dbReference type="PDB" id="1WLP"/>
    </source>
</evidence>
<evidence type="ECO:0007829" key="43">
    <source>
        <dbReference type="PDB" id="7YXW"/>
    </source>
</evidence>
<evidence type="ECO:0007829" key="44">
    <source>
        <dbReference type="PDB" id="8WEJ"/>
    </source>
</evidence>
<feature type="chain" id="PRO_0000096762" description="Neutrophil cytosol factor 1">
    <location>
        <begin position="1"/>
        <end position="390"/>
    </location>
</feature>
<feature type="domain" description="PX" evidence="2">
    <location>
        <begin position="4"/>
        <end position="125"/>
    </location>
</feature>
<feature type="domain" description="SH3 1" evidence="3">
    <location>
        <begin position="156"/>
        <end position="215"/>
    </location>
</feature>
<feature type="domain" description="SH3 2" evidence="3">
    <location>
        <begin position="226"/>
        <end position="285"/>
    </location>
</feature>
<feature type="region of interest" description="Disordered" evidence="4">
    <location>
        <begin position="285"/>
        <end position="390"/>
    </location>
</feature>
<feature type="compositionally biased region" description="Basic residues" evidence="4">
    <location>
        <begin position="309"/>
        <end position="318"/>
    </location>
</feature>
<feature type="modified residue" description="Phosphoserine" evidence="27">
    <location>
        <position position="303"/>
    </location>
</feature>
<feature type="modified residue" description="Phosphoserine" evidence="27">
    <location>
        <position position="304"/>
    </location>
</feature>
<feature type="modified residue" description="Phosphoserine" evidence="27">
    <location>
        <position position="320"/>
    </location>
</feature>
<feature type="modified residue" description="Phosphoserine" evidence="27">
    <location>
        <position position="328"/>
    </location>
</feature>
<feature type="modified residue" description="Phosphoserine" evidence="27">
    <location>
        <position position="345"/>
    </location>
</feature>
<feature type="modified residue" description="Phosphoserine" evidence="27">
    <location>
        <position position="348"/>
    </location>
</feature>
<feature type="splice variant" id="VSP_035032" description="In isoform 2." evidence="32">
    <original>W</original>
    <variation>QTSHLTGLLPLVLRNPQPQAPCQGSGSLAPGRTPALLGALNVLPTLWVAFCLSVHPVVAVGICAWQAGAGHVCVFCLDGYGTVCSL</variation>
    <location>
        <position position="193"/>
    </location>
</feature>
<feature type="splice variant" id="VSP_035033" description="In isoform 2." evidence="32">
    <location>
        <begin position="194"/>
        <end position="390"/>
    </location>
</feature>
<feature type="sequence variant" id="VAR_012476" description="In CGD1; dbSNP:rs119103270." evidence="6">
    <original>R</original>
    <variation>Q</variation>
    <location>
        <position position="42"/>
    </location>
</feature>
<feature type="sequence variant" id="VAR_014735" description="May influence susceptibility to systemic lupus erythematosus; dbSNP:rs201802880." evidence="25">
    <original>R</original>
    <variation>H</variation>
    <location>
        <position position="90"/>
    </location>
</feature>
<feature type="sequence variant" id="VAR_018479" description="In dbSNP:rs10614." evidence="13 14">
    <original>S</original>
    <variation>G</variation>
    <location>
        <position position="99"/>
    </location>
</feature>
<feature type="sequence variant" id="VAR_012477" evidence="5 30">
    <original>T</original>
    <variation>S</variation>
    <location>
        <position position="160"/>
    </location>
</feature>
<feature type="sequence variant" id="VAR_012478" description="In dbSNP:rs782555266." evidence="7 22 23 31">
    <original>N</original>
    <variation>D</variation>
    <location>
        <position position="166"/>
    </location>
</feature>
<feature type="sequence variant" id="VAR_018476" evidence="7">
    <original>K</original>
    <variation>E</variation>
    <location>
        <position position="258"/>
    </location>
</feature>
<feature type="sequence variant" id="VAR_012479" description="In dbSNP:rs1489201208." evidence="6">
    <original>G</original>
    <variation>S</variation>
    <location>
        <position position="262"/>
    </location>
</feature>
<feature type="sequence variant" id="VAR_012480" description="In dbSNP:rs13739." evidence="5 30">
    <original>A</original>
    <variation>V</variation>
    <location>
        <position position="308"/>
    </location>
</feature>
<feature type="mutagenesis site" description="Reduces affinity for membranes enriched in phosphatidylinositol 3,4-bisphosphate." evidence="10">
    <original>R</original>
    <variation>Q</variation>
    <location>
        <position position="43"/>
    </location>
</feature>
<feature type="mutagenesis site" description="Reduces affinity for membranes enriched in phosphatidylinositol 3,4-bisphosphate." evidence="10">
    <original>R</original>
    <variation>A</variation>
    <location>
        <position position="90"/>
    </location>
</feature>
<feature type="mutagenesis site" description="Abolishes autoinhibition and promotes phospholipid binding." evidence="10">
    <original>W</original>
    <variation>R</variation>
    <location>
        <position position="263"/>
    </location>
</feature>
<feature type="mutagenesis site" description="Abolishes autoinhibition and promotes phospholipid binding; when associated with E-304; E-328; E-359 and E-370." evidence="10">
    <original>S</original>
    <variation>E</variation>
    <location>
        <position position="303"/>
    </location>
</feature>
<feature type="mutagenesis site" description="Abolishes autoinhibition and promotes phospholipid binding; when associated with E-303; E-328; E-359 and E-370." evidence="10">
    <original>S</original>
    <variation>E</variation>
    <location>
        <position position="304"/>
    </location>
</feature>
<feature type="mutagenesis site" description="Abolishes autoinhibition and promotes phospholipid binding; when associated with E-303; E-304; E-359 and E-370." evidence="10">
    <original>S</original>
    <variation>E</variation>
    <location>
        <position position="328"/>
    </location>
</feature>
<feature type="mutagenesis site" description="Abolishes autoinhibition and promotes phospholipid binding; when associated with E-303; E-304; E-328 and E-370." evidence="10">
    <original>S</original>
    <variation>E</variation>
    <location>
        <position position="359"/>
    </location>
</feature>
<feature type="mutagenesis site" description="Abolishes autoinhibition and promotes phospholipid binding; when associated with E-303; E-304; E-328 and E-359." evidence="10">
    <original>S</original>
    <variation>E</variation>
    <location>
        <position position="370"/>
    </location>
</feature>
<feature type="sequence conflict" description="In Ref. 7; AAK19516." evidence="34" ref="7">
    <original>A</original>
    <variation>T</variation>
    <location>
        <position position="200"/>
    </location>
</feature>
<feature type="strand" evidence="38">
    <location>
        <begin position="6"/>
        <end position="17"/>
    </location>
</feature>
<feature type="strand" evidence="38">
    <location>
        <begin position="19"/>
        <end position="21"/>
    </location>
</feature>
<feature type="strand" evidence="38">
    <location>
        <begin position="23"/>
        <end position="32"/>
    </location>
</feature>
<feature type="strand" evidence="38">
    <location>
        <begin position="37"/>
        <end position="42"/>
    </location>
</feature>
<feature type="helix" evidence="38">
    <location>
        <begin position="44"/>
        <end position="57"/>
    </location>
</feature>
<feature type="turn" evidence="38">
    <location>
        <begin position="59"/>
        <end position="63"/>
    </location>
</feature>
<feature type="helix" evidence="38">
    <location>
        <begin position="67"/>
        <end position="69"/>
    </location>
</feature>
<feature type="helix" evidence="40">
    <location>
        <begin position="78"/>
        <end position="80"/>
    </location>
</feature>
<feature type="helix" evidence="38">
    <location>
        <begin position="84"/>
        <end position="101"/>
    </location>
</feature>
<feature type="helix" evidence="38">
    <location>
        <begin position="106"/>
        <end position="109"/>
    </location>
</feature>
<feature type="helix" evidence="38">
    <location>
        <begin position="112"/>
        <end position="118"/>
    </location>
</feature>
<feature type="helix" evidence="38">
    <location>
        <begin position="122"/>
        <end position="125"/>
    </location>
</feature>
<feature type="strand" evidence="38">
    <location>
        <begin position="137"/>
        <end position="140"/>
    </location>
</feature>
<feature type="strand" evidence="44">
    <location>
        <begin position="152"/>
        <end position="156"/>
    </location>
</feature>
<feature type="strand" evidence="39">
    <location>
        <begin position="159"/>
        <end position="162"/>
    </location>
</feature>
<feature type="strand" evidence="43">
    <location>
        <begin position="171"/>
        <end position="174"/>
    </location>
</feature>
<feature type="strand" evidence="39">
    <location>
        <begin position="182"/>
        <end position="187"/>
    </location>
</feature>
<feature type="strand" evidence="39">
    <location>
        <begin position="195"/>
        <end position="198"/>
    </location>
</feature>
<feature type="strand" evidence="41">
    <location>
        <begin position="202"/>
        <end position="206"/>
    </location>
</feature>
<feature type="helix" evidence="39">
    <location>
        <begin position="207"/>
        <end position="209"/>
    </location>
</feature>
<feature type="strand" evidence="41">
    <location>
        <begin position="210"/>
        <end position="214"/>
    </location>
</feature>
<feature type="strand" evidence="39">
    <location>
        <begin position="229"/>
        <end position="235"/>
    </location>
</feature>
<feature type="strand" evidence="42">
    <location>
        <begin position="241"/>
        <end position="244"/>
    </location>
</feature>
<feature type="strand" evidence="39">
    <location>
        <begin position="252"/>
        <end position="257"/>
    </location>
</feature>
<feature type="strand" evidence="39">
    <location>
        <begin position="262"/>
        <end position="268"/>
    </location>
</feature>
<feature type="strand" evidence="39">
    <location>
        <begin position="271"/>
        <end position="276"/>
    </location>
</feature>
<feature type="helix" evidence="39">
    <location>
        <begin position="277"/>
        <end position="279"/>
    </location>
</feature>
<feature type="strand" evidence="39">
    <location>
        <begin position="280"/>
        <end position="282"/>
    </location>
</feature>
<feature type="helix" evidence="39">
    <location>
        <begin position="287"/>
        <end position="292"/>
    </location>
</feature>
<feature type="helix" evidence="39">
    <location>
        <begin position="302"/>
        <end position="304"/>
    </location>
</feature>
<feature type="helix" evidence="39">
    <location>
        <begin position="321"/>
        <end position="328"/>
    </location>
</feature>
<feature type="helix" evidence="37">
    <location>
        <begin position="371"/>
        <end position="376"/>
    </location>
</feature>
<feature type="helix" evidence="37">
    <location>
        <begin position="380"/>
        <end position="385"/>
    </location>
</feature>
<keyword id="KW-0002">3D-structure</keyword>
<keyword id="KW-0025">Alternative splicing</keyword>
<keyword id="KW-0161">Chronic granulomatous disease</keyword>
<keyword id="KW-0963">Cytoplasm</keyword>
<keyword id="KW-0225">Disease variant</keyword>
<keyword id="KW-0446">Lipid-binding</keyword>
<keyword id="KW-0472">Membrane</keyword>
<keyword id="KW-0597">Phosphoprotein</keyword>
<keyword id="KW-1267">Proteomics identification</keyword>
<keyword id="KW-1185">Reference proteome</keyword>
<keyword id="KW-0677">Repeat</keyword>
<keyword id="KW-0728">SH3 domain</keyword>
<comment type="function">
    <text evidence="12 19 23 24 26">Subunit of the phagocyte NADPH oxidase complex that mediates the transfer of electrons from cytosolic NADPH to O2 to produce the superoxide anion (O2(-)) (PubMed:2547247, PubMed:2550933, PubMed:38355798). In the activated complex, electrons are first transferred from NADPH to flavin adenine dinucleotide (FAD) and subsequently transferred via two heme molecules to molecular oxygen, producing superoxide through an outer-sphere reaction (PubMed:38355798). Activation of the NADPH oxidase complex is initiated by the assembly of cytosolic subunits of the NADPH oxidase complex with the core NADPH oxidase complex to form a complex at the plasma membrane or phagosomal membrane (PubMed:38355798). This activation process is initiated by phosphorylation dependent binding of the cytosolic NCF1/p47-phox subunit to the C-terminus of CYBA/p22-phox (PubMed:12732142, PubMed:19801500).</text>
</comment>
<comment type="subunit">
    <text evidence="1 8 9 11 12 15 16 17 18 20 26 28 29">Component of the phagocyte NADPH oxidase complex composed of an obligatory core heterodimer formed by the membrane proteins CYBA and CYBB and the cytosolic regulatory subunits NCF1/p47-phox, NCF2/p67-phox, NCF4/p40-phox and the small GTPase RAC1 or RAC2 (PubMed:38355798). Part of a cytosolic complex composed at least by NCF1, NCF2 and NCF4 (PubMed:8280052). Interacts (via C-terminus) with NCF2 (via the C-terminal SH3 domain) (PubMed:12169629). Interacts with NCF4 (PubMed:15657040). Interacts with CYBB (PubMed:9224653). Interacts (via the second SH3 domain) with CYBA; interaction is phosphorylation-dependent (PubMed:12732142, PubMed:16326715). Interacts with NOXA1 (PubMed:12716910). Interacts with ADAM15 (PubMed:19718658). Interacts with TRAF4 (PubMed:12023963, PubMed:16052631). Interacts with FASLG (PubMed:19807924). Interacts with PARK7 (via C-terminus); the interaction is enhanced by LPS and modulates NCF1 phosphorylation and membrane translocation (By similarity).</text>
</comment>
<comment type="interaction">
    <interactant intactId="EBI-395044">
        <id>P14598</id>
    </interactant>
    <interactant intactId="EBI-375446">
        <id>Q8IZP0</id>
        <label>ABI1</label>
    </interactant>
    <organismsDiffer>false</organismsDiffer>
    <experiments>5</experiments>
</comment>
<comment type="interaction">
    <interactant intactId="EBI-395044">
        <id>P14598</id>
    </interactant>
    <interactant intactId="EBI-353944">
        <id>P60709</id>
        <label>ACTB</label>
    </interactant>
    <organismsDiffer>false</organismsDiffer>
    <experiments>3</experiments>
</comment>
<comment type="interaction">
    <interactant intactId="EBI-395044">
        <id>P14598</id>
    </interactant>
    <interactant intactId="EBI-2625954">
        <id>P78325</id>
        <label>ADAM8</label>
    </interactant>
    <organismsDiffer>false</organismsDiffer>
    <experiments>2</experiments>
</comment>
<comment type="interaction">
    <interactant intactId="EBI-395044">
        <id>P14598</id>
    </interactant>
    <interactant intactId="EBI-25837549">
        <id>P28329-3</id>
        <label>CHAT</label>
    </interactant>
    <organismsDiffer>false</organismsDiffer>
    <experiments>3</experiments>
</comment>
<comment type="interaction">
    <interactant intactId="EBI-395044">
        <id>P14598</id>
    </interactant>
    <interactant intactId="EBI-986058">
        <id>P13498</id>
        <label>CYBA</label>
    </interactant>
    <organismsDiffer>false</organismsDiffer>
    <experiments>7</experiments>
</comment>
<comment type="interaction">
    <interactant intactId="EBI-395044">
        <id>P14598</id>
    </interactant>
    <interactant intactId="EBI-348399">
        <id>P22607</id>
        <label>FGFR3</label>
    </interactant>
    <organismsDiffer>false</organismsDiffer>
    <experiments>3</experiments>
</comment>
<comment type="interaction">
    <interactant intactId="EBI-395044">
        <id>P14598</id>
    </interactant>
    <interactant intactId="EBI-353997">
        <id>P04899</id>
        <label>GNAI2</label>
    </interactant>
    <organismsDiffer>false</organismsDiffer>
    <experiments>2</experiments>
</comment>
<comment type="interaction">
    <interactant intactId="EBI-395044">
        <id>P14598</id>
    </interactant>
    <interactant intactId="EBI-351506">
        <id>P06396</id>
        <label>GSN</label>
    </interactant>
    <organismsDiffer>false</organismsDiffer>
    <experiments>3</experiments>
</comment>
<comment type="interaction">
    <interactant intactId="EBI-395044">
        <id>P14598</id>
    </interactant>
    <interactant intactId="EBI-351896">
        <id>P11142</id>
        <label>HSPA8</label>
    </interactant>
    <organismsDiffer>false</organismsDiffer>
    <experiments>2</experiments>
</comment>
<comment type="interaction">
    <interactant intactId="EBI-395044">
        <id>P14598</id>
    </interactant>
    <interactant intactId="EBI-466029">
        <id>P42858</id>
        <label>HTT</label>
    </interactant>
    <organismsDiffer>false</organismsDiffer>
    <experiments>6</experiments>
</comment>
<comment type="interaction">
    <interactant intactId="EBI-395044">
        <id>P14598</id>
    </interactant>
    <interactant intactId="EBI-489611">
        <id>P19878</id>
        <label>NCF2</label>
    </interactant>
    <organismsDiffer>false</organismsDiffer>
    <experiments>14</experiments>
</comment>
<comment type="interaction">
    <interactant intactId="EBI-395044">
        <id>P14598</id>
    </interactant>
    <interactant intactId="EBI-1036870">
        <id>Q15080</id>
        <label>NCF4</label>
    </interactant>
    <organismsDiffer>false</organismsDiffer>
    <experiments>2</experiments>
</comment>
<comment type="interaction">
    <interactant intactId="EBI-395044">
        <id>P14598</id>
    </interactant>
    <interactant intactId="EBI-295351">
        <id>Q05513</id>
        <label>PRKCZ</label>
    </interactant>
    <organismsDiffer>false</organismsDiffer>
    <experiments>3</experiments>
</comment>
<comment type="interaction">
    <interactant intactId="EBI-395044">
        <id>P14598</id>
    </interactant>
    <interactant intactId="EBI-3650647">
        <id>Q9BUZ4</id>
        <label>TRAF4</label>
    </interactant>
    <organismsDiffer>false</organismsDiffer>
    <experiments>5</experiments>
</comment>
<comment type="subcellular location">
    <subcellularLocation>
        <location evidence="24">Cytoplasm</location>
        <location evidence="24">Cytosol</location>
    </subcellularLocation>
    <subcellularLocation>
        <location evidence="10">Membrane</location>
        <topology evidence="10">Peripheral membrane protein</topology>
        <orientation evidence="10">Cytoplasmic side</orientation>
    </subcellularLocation>
</comment>
<comment type="alternative products">
    <event type="alternative splicing"/>
    <isoform>
        <id>P14598-1</id>
        <name>1</name>
        <sequence type="displayed"/>
    </isoform>
    <isoform>
        <id>P14598-2</id>
        <name>2</name>
        <sequence type="described" ref="VSP_035032 VSP_035033"/>
    </isoform>
</comment>
<comment type="tissue specificity">
    <text evidence="23 24">Detected in peripheral blood monocytes and neutrophils (at protein level).</text>
</comment>
<comment type="domain">
    <text evidence="10 12">The PX domain mediates interaction with phosphatidylinositol 3,4-bisphosphate and other anionic phospholipids (PubMed:12356722). In the autoinhibited, unphosphorylated state an intramolecular interaction with the C-terminal SH3 domain precludes phospholipid binding and interaction with CYBA (PubMed:12732142). Phosphorylation disrupts the autoinhibited state (PubMed:12732142).</text>
</comment>
<comment type="PTM">
    <text evidence="19 27">Phosphorylated by PRKCD; phosphorylation induces activation of NCF1, leading to assembly and activation of the NADPH oxidase complex.</text>
</comment>
<comment type="disease" evidence="6 21">
    <disease id="DI-00305">
        <name>Granulomatous disease, chronic, autosomal recessive, 1</name>
        <acronym>CGD1</acronym>
        <description>A form of chronic granulomatous disease, a primary immunodeficiency characterized by severe recurrent bacterial and fungal infections, along with manifestations of chronic granulomatous inflammation. It results from an impaired ability of phagocytes to mount a burst of reactive oxygen species in response to pathogens.</description>
        <dbReference type="MIM" id="233700"/>
    </disease>
    <text>The disease is caused by variants affecting the gene represented in this entry.</text>
</comment>
<comment type="miscellaneous">
    <molecule>Isoform 2</molecule>
    <text evidence="34">Due to intron retention.</text>
</comment>
<comment type="sequence caution" evidence="34">
    <conflict type="erroneous initiation">
        <sequence resource="EMBL-CDS" id="BAF84783"/>
    </conflict>
    <text>Truncated N-terminus.</text>
</comment>
<comment type="sequence caution" evidence="34">
    <conflict type="erroneous initiation">
        <sequence resource="EMBL-CDS" id="BAG54596"/>
    </conflict>
    <text>Truncated N-terminus.</text>
</comment>
<comment type="online information" name="NCF1base">
    <link uri="https://databases.lovd.nl/shared/genes/NCF1"/>
    <text>NCF1 deficiency database</text>
</comment>
<protein>
    <recommendedName>
        <fullName evidence="34">Neutrophil cytosol factor 1</fullName>
        <shortName>NCF-1</shortName>
    </recommendedName>
    <alternativeName>
        <fullName>47 kDa autosomal chronic granulomatous disease protein</fullName>
    </alternativeName>
    <alternativeName>
        <fullName>47 kDa neutrophil oxidase factor</fullName>
    </alternativeName>
    <alternativeName>
        <fullName>NCF-47K</fullName>
    </alternativeName>
    <alternativeName>
        <fullName>Neutrophil NADPH oxidase factor 1</fullName>
    </alternativeName>
    <alternativeName>
        <fullName>Nox organizer 2</fullName>
    </alternativeName>
    <alternativeName>
        <fullName>Nox-organizing protein 2</fullName>
    </alternativeName>
    <alternativeName>
        <fullName>SH3 and PX domain-containing protein 1A</fullName>
    </alternativeName>
    <alternativeName>
        <fullName evidence="33">p47-phox</fullName>
    </alternativeName>
</protein>